<keyword id="KW-0150">Chloroplast</keyword>
<keyword id="KW-0934">Plastid</keyword>
<keyword id="KW-0687">Ribonucleoprotein</keyword>
<keyword id="KW-0689">Ribosomal protein</keyword>
<keyword id="KW-0694">RNA-binding</keyword>
<keyword id="KW-0699">rRNA-binding</keyword>
<feature type="chain" id="PRO_0000276922" description="Small ribosomal subunit protein uS19c">
    <location>
        <begin position="1"/>
        <end position="93"/>
    </location>
</feature>
<dbReference type="EMBL" id="DQ396875">
    <property type="protein sequence ID" value="ABD48269.1"/>
    <property type="molecule type" value="Genomic_DNA"/>
</dbReference>
<dbReference type="RefSeq" id="YP_635986.1">
    <property type="nucleotide sequence ID" value="NC_008101.1"/>
</dbReference>
<dbReference type="SMR" id="Q1KVT8"/>
<dbReference type="GeneID" id="4099802"/>
<dbReference type="GO" id="GO:0009507">
    <property type="term" value="C:chloroplast"/>
    <property type="evidence" value="ECO:0007669"/>
    <property type="project" value="UniProtKB-SubCell"/>
</dbReference>
<dbReference type="GO" id="GO:0005763">
    <property type="term" value="C:mitochondrial small ribosomal subunit"/>
    <property type="evidence" value="ECO:0007669"/>
    <property type="project" value="TreeGrafter"/>
</dbReference>
<dbReference type="GO" id="GO:0019843">
    <property type="term" value="F:rRNA binding"/>
    <property type="evidence" value="ECO:0007669"/>
    <property type="project" value="UniProtKB-UniRule"/>
</dbReference>
<dbReference type="GO" id="GO:0003735">
    <property type="term" value="F:structural constituent of ribosome"/>
    <property type="evidence" value="ECO:0007669"/>
    <property type="project" value="InterPro"/>
</dbReference>
<dbReference type="GO" id="GO:0000028">
    <property type="term" value="P:ribosomal small subunit assembly"/>
    <property type="evidence" value="ECO:0007669"/>
    <property type="project" value="TreeGrafter"/>
</dbReference>
<dbReference type="GO" id="GO:0006412">
    <property type="term" value="P:translation"/>
    <property type="evidence" value="ECO:0007669"/>
    <property type="project" value="UniProtKB-UniRule"/>
</dbReference>
<dbReference type="FunFam" id="3.30.860.10:FF:000001">
    <property type="entry name" value="30S ribosomal protein S19"/>
    <property type="match status" value="1"/>
</dbReference>
<dbReference type="Gene3D" id="3.30.860.10">
    <property type="entry name" value="30s Ribosomal Protein S19, Chain A"/>
    <property type="match status" value="1"/>
</dbReference>
<dbReference type="HAMAP" id="MF_00531">
    <property type="entry name" value="Ribosomal_uS19"/>
    <property type="match status" value="1"/>
</dbReference>
<dbReference type="InterPro" id="IPR002222">
    <property type="entry name" value="Ribosomal_uS19"/>
</dbReference>
<dbReference type="InterPro" id="IPR005732">
    <property type="entry name" value="Ribosomal_uS19_bac-type"/>
</dbReference>
<dbReference type="InterPro" id="IPR020934">
    <property type="entry name" value="Ribosomal_uS19_CS"/>
</dbReference>
<dbReference type="InterPro" id="IPR023575">
    <property type="entry name" value="Ribosomal_uS19_SF"/>
</dbReference>
<dbReference type="NCBIfam" id="TIGR01050">
    <property type="entry name" value="rpsS_bact"/>
    <property type="match status" value="1"/>
</dbReference>
<dbReference type="PANTHER" id="PTHR11880">
    <property type="entry name" value="RIBOSOMAL PROTEIN S19P FAMILY MEMBER"/>
    <property type="match status" value="1"/>
</dbReference>
<dbReference type="PANTHER" id="PTHR11880:SF8">
    <property type="entry name" value="SMALL RIBOSOMAL SUBUNIT PROTEIN US19M"/>
    <property type="match status" value="1"/>
</dbReference>
<dbReference type="Pfam" id="PF00203">
    <property type="entry name" value="Ribosomal_S19"/>
    <property type="match status" value="1"/>
</dbReference>
<dbReference type="PIRSF" id="PIRSF002144">
    <property type="entry name" value="Ribosomal_S19"/>
    <property type="match status" value="1"/>
</dbReference>
<dbReference type="PRINTS" id="PR00975">
    <property type="entry name" value="RIBOSOMALS19"/>
</dbReference>
<dbReference type="SUPFAM" id="SSF54570">
    <property type="entry name" value="Ribosomal protein S19"/>
    <property type="match status" value="1"/>
</dbReference>
<dbReference type="PROSITE" id="PS00323">
    <property type="entry name" value="RIBOSOMAL_S19"/>
    <property type="match status" value="1"/>
</dbReference>
<gene>
    <name evidence="1" type="primary">rps19</name>
</gene>
<comment type="function">
    <text evidence="1">Protein S19 forms a complex with S13 that binds strongly to the 16S ribosomal RNA.</text>
</comment>
<comment type="subcellular location">
    <subcellularLocation>
        <location>Plastid</location>
        <location>Chloroplast</location>
    </subcellularLocation>
</comment>
<comment type="similarity">
    <text evidence="1">Belongs to the universal ribosomal protein uS19 family.</text>
</comment>
<accession>Q1KVT8</accession>
<proteinExistence type="inferred from homology"/>
<sequence length="93" mass="10584">MTRSIKKGPFVADHLLKKIEKFNAQGQKKVLTTWSRSSTILPVMIGHTISTYNGREFIPVFVTDQMVGHKLGEFAPTRTFKGHVKSDKKAKRR</sequence>
<protein>
    <recommendedName>
        <fullName evidence="1">Small ribosomal subunit protein uS19c</fullName>
    </recommendedName>
    <alternativeName>
        <fullName evidence="2">30S ribosomal protein S19, chloroplastic</fullName>
    </alternativeName>
</protein>
<organism>
    <name type="scientific">Tetradesmus obliquus</name>
    <name type="common">Green alga</name>
    <name type="synonym">Acutodesmus obliquus</name>
    <dbReference type="NCBI Taxonomy" id="3088"/>
    <lineage>
        <taxon>Eukaryota</taxon>
        <taxon>Viridiplantae</taxon>
        <taxon>Chlorophyta</taxon>
        <taxon>core chlorophytes</taxon>
        <taxon>Chlorophyceae</taxon>
        <taxon>CS clade</taxon>
        <taxon>Sphaeropleales</taxon>
        <taxon>Scenedesmaceae</taxon>
        <taxon>Tetradesmus</taxon>
    </lineage>
</organism>
<evidence type="ECO:0000255" key="1">
    <source>
        <dbReference type="HAMAP-Rule" id="MF_00531"/>
    </source>
</evidence>
<evidence type="ECO:0000305" key="2"/>
<name>RR19_TETOB</name>
<reference key="1">
    <citation type="journal article" date="2006" name="BMC Evol. Biol.">
        <title>The complete chloroplast genome sequence of the chlorophycean green alga Scenedesmus obliquus reveals a compact gene organization and a biased distribution of genes on the two DNA strands.</title>
        <authorList>
            <person name="de Cambiaire J.-C."/>
            <person name="Otis C."/>
            <person name="Lemieux C."/>
            <person name="Turmel M."/>
        </authorList>
    </citation>
    <scope>NUCLEOTIDE SEQUENCE [LARGE SCALE GENOMIC DNA]</scope>
    <source>
        <strain>UTEX 393</strain>
    </source>
</reference>
<geneLocation type="chloroplast"/>